<dbReference type="EC" id="5.3.1.24" evidence="1"/>
<dbReference type="EMBL" id="AM263198">
    <property type="protein sequence ID" value="CAK21063.1"/>
    <property type="molecule type" value="Genomic_DNA"/>
</dbReference>
<dbReference type="RefSeq" id="WP_011702429.1">
    <property type="nucleotide sequence ID" value="NC_008555.1"/>
</dbReference>
<dbReference type="SMR" id="A0AJ81"/>
<dbReference type="STRING" id="386043.lwe1645"/>
<dbReference type="GeneID" id="61189521"/>
<dbReference type="KEGG" id="lwe:lwe1645"/>
<dbReference type="eggNOG" id="COG0135">
    <property type="taxonomic scope" value="Bacteria"/>
</dbReference>
<dbReference type="HOGENOM" id="CLU_076364_1_0_9"/>
<dbReference type="OrthoDB" id="9786954at2"/>
<dbReference type="UniPathway" id="UPA00035">
    <property type="reaction ID" value="UER00042"/>
</dbReference>
<dbReference type="Proteomes" id="UP000000779">
    <property type="component" value="Chromosome"/>
</dbReference>
<dbReference type="GO" id="GO:0004640">
    <property type="term" value="F:phosphoribosylanthranilate isomerase activity"/>
    <property type="evidence" value="ECO:0007669"/>
    <property type="project" value="UniProtKB-UniRule"/>
</dbReference>
<dbReference type="GO" id="GO:0000162">
    <property type="term" value="P:L-tryptophan biosynthetic process"/>
    <property type="evidence" value="ECO:0007669"/>
    <property type="project" value="UniProtKB-UniRule"/>
</dbReference>
<dbReference type="CDD" id="cd00405">
    <property type="entry name" value="PRAI"/>
    <property type="match status" value="1"/>
</dbReference>
<dbReference type="FunFam" id="3.20.20.70:FF:000075">
    <property type="entry name" value="Tryptophan biosynthesis protein TRP1"/>
    <property type="match status" value="1"/>
</dbReference>
<dbReference type="Gene3D" id="3.20.20.70">
    <property type="entry name" value="Aldolase class I"/>
    <property type="match status" value="1"/>
</dbReference>
<dbReference type="HAMAP" id="MF_00135">
    <property type="entry name" value="PRAI"/>
    <property type="match status" value="1"/>
</dbReference>
<dbReference type="InterPro" id="IPR013785">
    <property type="entry name" value="Aldolase_TIM"/>
</dbReference>
<dbReference type="InterPro" id="IPR001240">
    <property type="entry name" value="PRAI_dom"/>
</dbReference>
<dbReference type="InterPro" id="IPR011060">
    <property type="entry name" value="RibuloseP-bd_barrel"/>
</dbReference>
<dbReference type="InterPro" id="IPR044643">
    <property type="entry name" value="TrpF_fam"/>
</dbReference>
<dbReference type="NCBIfam" id="NF002300">
    <property type="entry name" value="PRK01222.1-7"/>
    <property type="match status" value="1"/>
</dbReference>
<dbReference type="PANTHER" id="PTHR42894">
    <property type="entry name" value="N-(5'-PHOSPHORIBOSYL)ANTHRANILATE ISOMERASE"/>
    <property type="match status" value="1"/>
</dbReference>
<dbReference type="PANTHER" id="PTHR42894:SF1">
    <property type="entry name" value="N-(5'-PHOSPHORIBOSYL)ANTHRANILATE ISOMERASE"/>
    <property type="match status" value="1"/>
</dbReference>
<dbReference type="Pfam" id="PF00697">
    <property type="entry name" value="PRAI"/>
    <property type="match status" value="1"/>
</dbReference>
<dbReference type="SUPFAM" id="SSF51366">
    <property type="entry name" value="Ribulose-phoshate binding barrel"/>
    <property type="match status" value="1"/>
</dbReference>
<evidence type="ECO:0000255" key="1">
    <source>
        <dbReference type="HAMAP-Rule" id="MF_00135"/>
    </source>
</evidence>
<reference key="1">
    <citation type="journal article" date="2006" name="J. Bacteriol.">
        <title>Whole-genome sequence of Listeria welshimeri reveals common steps in genome reduction with Listeria innocua as compared to Listeria monocytogenes.</title>
        <authorList>
            <person name="Hain T."/>
            <person name="Steinweg C."/>
            <person name="Kuenne C.T."/>
            <person name="Billion A."/>
            <person name="Ghai R."/>
            <person name="Chatterjee S.S."/>
            <person name="Domann E."/>
            <person name="Kaerst U."/>
            <person name="Goesmann A."/>
            <person name="Bekel T."/>
            <person name="Bartels D."/>
            <person name="Kaiser O."/>
            <person name="Meyer F."/>
            <person name="Puehler A."/>
            <person name="Weisshaar B."/>
            <person name="Wehland J."/>
            <person name="Liang C."/>
            <person name="Dandekar T."/>
            <person name="Lampidis R."/>
            <person name="Kreft J."/>
            <person name="Goebel W."/>
            <person name="Chakraborty T."/>
        </authorList>
    </citation>
    <scope>NUCLEOTIDE SEQUENCE [LARGE SCALE GENOMIC DNA]</scope>
    <source>
        <strain>ATCC 35897 / DSM 20650 / CCUG 15529 / CIP 8149 / NCTC 11857 / SLCC 5334 / V8</strain>
    </source>
</reference>
<protein>
    <recommendedName>
        <fullName evidence="1">N-(5'-phosphoribosyl)anthranilate isomerase</fullName>
        <shortName evidence="1">PRAI</shortName>
        <ecNumber evidence="1">5.3.1.24</ecNumber>
    </recommendedName>
</protein>
<accession>A0AJ81</accession>
<name>TRPF_LISW6</name>
<sequence length="202" mass="22018">MIVKICGLKKAVDVQAAVENGADMIGFVFAKSKRQVTIEQAHELAKNIPTNIKKVGVFVNPTEEELTAAIKGVPLDIVQLHGQEPTSQAERTDAEVIKAFPVKEGKLPDNISDYKNAYILLDAPAEEYEGGSGKTFDWDKINSDVLLKNKLIIAGGLNAENVQEAIHRFEPYGVDISSGVETNGEKDPEKIEIFIKTAKGVE</sequence>
<keyword id="KW-0028">Amino-acid biosynthesis</keyword>
<keyword id="KW-0057">Aromatic amino acid biosynthesis</keyword>
<keyword id="KW-0413">Isomerase</keyword>
<keyword id="KW-0822">Tryptophan biosynthesis</keyword>
<feature type="chain" id="PRO_1000018605" description="N-(5'-phosphoribosyl)anthranilate isomerase">
    <location>
        <begin position="1"/>
        <end position="202"/>
    </location>
</feature>
<organism>
    <name type="scientific">Listeria welshimeri serovar 6b (strain ATCC 35897 / DSM 20650 / CCUG 15529 / CIP 8149 / NCTC 11857 / SLCC 5334 / V8)</name>
    <dbReference type="NCBI Taxonomy" id="386043"/>
    <lineage>
        <taxon>Bacteria</taxon>
        <taxon>Bacillati</taxon>
        <taxon>Bacillota</taxon>
        <taxon>Bacilli</taxon>
        <taxon>Bacillales</taxon>
        <taxon>Listeriaceae</taxon>
        <taxon>Listeria</taxon>
    </lineage>
</organism>
<comment type="catalytic activity">
    <reaction evidence="1">
        <text>N-(5-phospho-beta-D-ribosyl)anthranilate = 1-(2-carboxyphenylamino)-1-deoxy-D-ribulose 5-phosphate</text>
        <dbReference type="Rhea" id="RHEA:21540"/>
        <dbReference type="ChEBI" id="CHEBI:18277"/>
        <dbReference type="ChEBI" id="CHEBI:58613"/>
        <dbReference type="EC" id="5.3.1.24"/>
    </reaction>
</comment>
<comment type="pathway">
    <text evidence="1">Amino-acid biosynthesis; L-tryptophan biosynthesis; L-tryptophan from chorismate: step 3/5.</text>
</comment>
<comment type="similarity">
    <text evidence="1">Belongs to the TrpF family.</text>
</comment>
<proteinExistence type="inferred from homology"/>
<gene>
    <name evidence="1" type="primary">trpF</name>
    <name type="ordered locus">lwe1645</name>
</gene>